<accession>Q56A06</accession>
<accession>B2RRD8</accession>
<accession>Q5U620</accession>
<accession>Q8C787</accession>
<evidence type="ECO:0000250" key="1">
    <source>
        <dbReference type="UniProtKB" id="Q8N394"/>
    </source>
</evidence>
<evidence type="ECO:0000255" key="2"/>
<evidence type="ECO:0000255" key="3">
    <source>
        <dbReference type="PROSITE-ProRule" id="PRU00339"/>
    </source>
</evidence>
<evidence type="ECO:0000303" key="4">
    <source>
    </source>
</evidence>
<evidence type="ECO:0000305" key="5"/>
<evidence type="ECO:0000312" key="6">
    <source>
        <dbReference type="MGI" id="MGI:1914057"/>
    </source>
</evidence>
<keyword id="KW-0025">Alternative splicing</keyword>
<keyword id="KW-0256">Endoplasmic reticulum</keyword>
<keyword id="KW-0472">Membrane</keyword>
<keyword id="KW-1185">Reference proteome</keyword>
<keyword id="KW-0677">Repeat</keyword>
<keyword id="KW-0802">TPR repeat</keyword>
<keyword id="KW-0808">Transferase</keyword>
<keyword id="KW-0812">Transmembrane</keyword>
<keyword id="KW-1133">Transmembrane helix</keyword>
<sequence length="836" mass="94176">MIAELVSSALGLALYLNTLSADFCYDDSRAIKTNQDLLPETPWTHIFYNDFWGTLLTHSGSHKSYRPLCTLSFRLNHAIGGLNPWSYHLVNVLLHAAVTGLFTRFSKALLGDGYWTFMAGLMFASHPIHTEAVAGIVGRADVGASLFFLLSLLCYIKHCSTRGYSARTWGWFLGTGLCAGCSMLWKEQGVTVLAVSAVYDVFVFHRLKMKQILPTIYKRKNLSLFLSISLLTFWGTCLLGARLYWMGNKPPSFSNSDNPAADSDSLLARTLTFLYLPTKNLWLLLCPDTLSFDWSMDAVPLLKTVCDWRNLHTVAFYSGLLLLAYCGLKNPSLEGECNGKALTNGKQNANGHSCHSDVEYRNSEMKPSFASKVENGIKNCVPQRTQLPSTENIVILSLSLLIIPFIPATNLFFYVGFVIAERVLYIPSMGFCLLITVGARALYVKVQKRFLKSLVFYATATLIVFYGVKTAIRNGDWQNEEMLYRSGIKVNPAKAWGNLGNVLKSQSKISEAESAYRNALFYRSNMADMLYNLGLLLQENSRFAEALHYYKLAIGSRPTLASAYLNTGIILMNQGKTEEARRTFLKCSEIPDENLKDPHAHKSSVTSCLYNLGKLYHEQGRYEEALSVYREAIQKMPRHFAPQSLYNMMGEAYMRLSKLPEAEHWYMESLRSKTDHIPAHLTYGKLLALTGRKSEAEKFFLKAIELDPTKGNCYMHYGQFLLEESRLTEAAEMAKKAAELDNTEFDVVFNAAHMLRQASLNEAAEKYYDLAARLRPNYPAALMNLGAILHLNGRLQKAEANYLRALQLKPDDVITQSNLRKLWNIMEKQGLKTSKT</sequence>
<dbReference type="EC" id="2.4.1.109" evidence="1"/>
<dbReference type="EMBL" id="AK052344">
    <property type="protein sequence ID" value="BAC34946.1"/>
    <property type="molecule type" value="mRNA"/>
</dbReference>
<dbReference type="EMBL" id="BC034657">
    <property type="protein sequence ID" value="AAH34657.1"/>
    <property type="molecule type" value="mRNA"/>
</dbReference>
<dbReference type="EMBL" id="BC092226">
    <property type="protein sequence ID" value="AAH92226.1"/>
    <property type="molecule type" value="mRNA"/>
</dbReference>
<dbReference type="EMBL" id="BC138362">
    <property type="protein sequence ID" value="AAI38363.1"/>
    <property type="molecule type" value="mRNA"/>
</dbReference>
<dbReference type="EMBL" id="BC138363">
    <property type="protein sequence ID" value="AAI38364.1"/>
    <property type="molecule type" value="mRNA"/>
</dbReference>
<dbReference type="CCDS" id="CCDS24157.1">
    <molecule id="Q56A06-1"/>
</dbReference>
<dbReference type="RefSeq" id="NP_796342.2">
    <molecule id="Q56A06-1"/>
    <property type="nucleotide sequence ID" value="NM_177368.4"/>
</dbReference>
<dbReference type="SMR" id="Q56A06"/>
<dbReference type="FunCoup" id="Q56A06">
    <property type="interactions" value="806"/>
</dbReference>
<dbReference type="STRING" id="10090.ENSMUSP00000061919"/>
<dbReference type="TCDB" id="8.A.95.1.3">
    <property type="family name" value="the transmembrane and tpr repeat-containing protein 3 (tmtc3) family"/>
</dbReference>
<dbReference type="GlyCosmos" id="Q56A06">
    <property type="glycosylation" value="1 site, No reported glycans"/>
</dbReference>
<dbReference type="iPTMnet" id="Q56A06"/>
<dbReference type="PhosphoSitePlus" id="Q56A06"/>
<dbReference type="PaxDb" id="10090-ENSMUSP00000061919"/>
<dbReference type="ProteomicsDB" id="260713">
    <molecule id="Q56A06-1"/>
</dbReference>
<dbReference type="ProteomicsDB" id="260714">
    <molecule id="Q56A06-2"/>
</dbReference>
<dbReference type="Antibodypedia" id="29839">
    <property type="antibodies" value="54 antibodies from 17 providers"/>
</dbReference>
<dbReference type="Ensembl" id="ENSMUST00000061506.9">
    <molecule id="Q56A06-1"/>
    <property type="protein sequence ID" value="ENSMUSP00000061919.9"/>
    <property type="gene ID" value="ENSMUSG00000036019.9"/>
</dbReference>
<dbReference type="GeneID" id="278279"/>
<dbReference type="KEGG" id="mmu:278279"/>
<dbReference type="UCSC" id="uc007gym.1">
    <molecule id="Q56A06-1"/>
    <property type="organism name" value="mouse"/>
</dbReference>
<dbReference type="UCSC" id="uc007gyn.1">
    <molecule id="Q56A06-2"/>
    <property type="organism name" value="mouse"/>
</dbReference>
<dbReference type="AGR" id="MGI:1914057"/>
<dbReference type="CTD" id="160335"/>
<dbReference type="MGI" id="MGI:1914057">
    <property type="gene designation" value="Tmtc2"/>
</dbReference>
<dbReference type="VEuPathDB" id="HostDB:ENSMUSG00000036019"/>
<dbReference type="eggNOG" id="KOG1124">
    <property type="taxonomic scope" value="Eukaryota"/>
</dbReference>
<dbReference type="GeneTree" id="ENSGT00940000156144"/>
<dbReference type="HOGENOM" id="CLU_011615_4_0_1"/>
<dbReference type="InParanoid" id="Q56A06"/>
<dbReference type="OMA" id="TQIFYND"/>
<dbReference type="OrthoDB" id="1658288at2759"/>
<dbReference type="PhylomeDB" id="Q56A06"/>
<dbReference type="TreeFam" id="TF328339"/>
<dbReference type="UniPathway" id="UPA00378"/>
<dbReference type="BioGRID-ORCS" id="278279">
    <property type="hits" value="1 hit in 80 CRISPR screens"/>
</dbReference>
<dbReference type="ChiTaRS" id="Tmtc2">
    <property type="organism name" value="mouse"/>
</dbReference>
<dbReference type="PRO" id="PR:Q56A06"/>
<dbReference type="Proteomes" id="UP000000589">
    <property type="component" value="Chromosome 10"/>
</dbReference>
<dbReference type="RNAct" id="Q56A06">
    <property type="molecule type" value="protein"/>
</dbReference>
<dbReference type="Bgee" id="ENSMUSG00000036019">
    <property type="expression patterns" value="Expressed in manus and 244 other cell types or tissues"/>
</dbReference>
<dbReference type="GO" id="GO:0005789">
    <property type="term" value="C:endoplasmic reticulum membrane"/>
    <property type="evidence" value="ECO:0000250"/>
    <property type="project" value="UniProtKB"/>
</dbReference>
<dbReference type="GO" id="GO:0004169">
    <property type="term" value="F:dolichyl-phosphate-mannose-protein mannosyltransferase activity"/>
    <property type="evidence" value="ECO:0000250"/>
    <property type="project" value="UniProtKB"/>
</dbReference>
<dbReference type="GO" id="GO:0055074">
    <property type="term" value="P:calcium ion homeostasis"/>
    <property type="evidence" value="ECO:0000250"/>
    <property type="project" value="UniProtKB"/>
</dbReference>
<dbReference type="GO" id="GO:0035269">
    <property type="term" value="P:protein O-linked mannosylation"/>
    <property type="evidence" value="ECO:0000250"/>
    <property type="project" value="UniProtKB"/>
</dbReference>
<dbReference type="FunFam" id="1.25.40.10:FF:000130">
    <property type="entry name" value="Transmembrane and tetratricopeptide repeat containing 2"/>
    <property type="match status" value="1"/>
</dbReference>
<dbReference type="FunFam" id="1.25.40.10:FF:000153">
    <property type="entry name" value="Transmembrane and tetratricopeptide repeat containing 2"/>
    <property type="match status" value="1"/>
</dbReference>
<dbReference type="FunFam" id="1.25.40.10:FF:000190">
    <property type="entry name" value="Transmembrane and TPR repeat-containing protein 2"/>
    <property type="match status" value="1"/>
</dbReference>
<dbReference type="Gene3D" id="1.25.40.10">
    <property type="entry name" value="Tetratricopeptide repeat domain"/>
    <property type="match status" value="3"/>
</dbReference>
<dbReference type="InterPro" id="IPR013618">
    <property type="entry name" value="TMTC_DUF1736"/>
</dbReference>
<dbReference type="InterPro" id="IPR052384">
    <property type="entry name" value="TMTC_O-mannosyltransferase"/>
</dbReference>
<dbReference type="InterPro" id="IPR011990">
    <property type="entry name" value="TPR-like_helical_dom_sf"/>
</dbReference>
<dbReference type="InterPro" id="IPR019734">
    <property type="entry name" value="TPR_rpt"/>
</dbReference>
<dbReference type="PANTHER" id="PTHR44216">
    <property type="entry name" value="PROTEIN O-MANNOSYL-TRANSFERASE TMTC2"/>
    <property type="match status" value="1"/>
</dbReference>
<dbReference type="PANTHER" id="PTHR44216:SF3">
    <property type="entry name" value="PROTEIN O-MANNOSYL-TRANSFERASE TMTC2"/>
    <property type="match status" value="1"/>
</dbReference>
<dbReference type="Pfam" id="PF08409">
    <property type="entry name" value="TMTC_DUF1736"/>
    <property type="match status" value="1"/>
</dbReference>
<dbReference type="Pfam" id="PF00515">
    <property type="entry name" value="TPR_1"/>
    <property type="match status" value="1"/>
</dbReference>
<dbReference type="Pfam" id="PF13424">
    <property type="entry name" value="TPR_12"/>
    <property type="match status" value="1"/>
</dbReference>
<dbReference type="Pfam" id="PF13432">
    <property type="entry name" value="TPR_16"/>
    <property type="match status" value="1"/>
</dbReference>
<dbReference type="Pfam" id="PF13181">
    <property type="entry name" value="TPR_8"/>
    <property type="match status" value="1"/>
</dbReference>
<dbReference type="SMART" id="SM00028">
    <property type="entry name" value="TPR"/>
    <property type="match status" value="9"/>
</dbReference>
<dbReference type="SUPFAM" id="SSF48452">
    <property type="entry name" value="TPR-like"/>
    <property type="match status" value="2"/>
</dbReference>
<dbReference type="PROSITE" id="PS50005">
    <property type="entry name" value="TPR"/>
    <property type="match status" value="9"/>
</dbReference>
<dbReference type="PROSITE" id="PS50293">
    <property type="entry name" value="TPR_REGION"/>
    <property type="match status" value="4"/>
</dbReference>
<organism>
    <name type="scientific">Mus musculus</name>
    <name type="common">Mouse</name>
    <dbReference type="NCBI Taxonomy" id="10090"/>
    <lineage>
        <taxon>Eukaryota</taxon>
        <taxon>Metazoa</taxon>
        <taxon>Chordata</taxon>
        <taxon>Craniata</taxon>
        <taxon>Vertebrata</taxon>
        <taxon>Euteleostomi</taxon>
        <taxon>Mammalia</taxon>
        <taxon>Eutheria</taxon>
        <taxon>Euarchontoglires</taxon>
        <taxon>Glires</taxon>
        <taxon>Rodentia</taxon>
        <taxon>Myomorpha</taxon>
        <taxon>Muroidea</taxon>
        <taxon>Muridae</taxon>
        <taxon>Murinae</taxon>
        <taxon>Mus</taxon>
        <taxon>Mus</taxon>
    </lineage>
</organism>
<name>TMTC2_MOUSE</name>
<reference key="1">
    <citation type="journal article" date="2005" name="Science">
        <title>The transcriptional landscape of the mammalian genome.</title>
        <authorList>
            <person name="Carninci P."/>
            <person name="Kasukawa T."/>
            <person name="Katayama S."/>
            <person name="Gough J."/>
            <person name="Frith M.C."/>
            <person name="Maeda N."/>
            <person name="Oyama R."/>
            <person name="Ravasi T."/>
            <person name="Lenhard B."/>
            <person name="Wells C."/>
            <person name="Kodzius R."/>
            <person name="Shimokawa K."/>
            <person name="Bajic V.B."/>
            <person name="Brenner S.E."/>
            <person name="Batalov S."/>
            <person name="Forrest A.R."/>
            <person name="Zavolan M."/>
            <person name="Davis M.J."/>
            <person name="Wilming L.G."/>
            <person name="Aidinis V."/>
            <person name="Allen J.E."/>
            <person name="Ambesi-Impiombato A."/>
            <person name="Apweiler R."/>
            <person name="Aturaliya R.N."/>
            <person name="Bailey T.L."/>
            <person name="Bansal M."/>
            <person name="Baxter L."/>
            <person name="Beisel K.W."/>
            <person name="Bersano T."/>
            <person name="Bono H."/>
            <person name="Chalk A.M."/>
            <person name="Chiu K.P."/>
            <person name="Choudhary V."/>
            <person name="Christoffels A."/>
            <person name="Clutterbuck D.R."/>
            <person name="Crowe M.L."/>
            <person name="Dalla E."/>
            <person name="Dalrymple B.P."/>
            <person name="de Bono B."/>
            <person name="Della Gatta G."/>
            <person name="di Bernardo D."/>
            <person name="Down T."/>
            <person name="Engstrom P."/>
            <person name="Fagiolini M."/>
            <person name="Faulkner G."/>
            <person name="Fletcher C.F."/>
            <person name="Fukushima T."/>
            <person name="Furuno M."/>
            <person name="Futaki S."/>
            <person name="Gariboldi M."/>
            <person name="Georgii-Hemming P."/>
            <person name="Gingeras T.R."/>
            <person name="Gojobori T."/>
            <person name="Green R.E."/>
            <person name="Gustincich S."/>
            <person name="Harbers M."/>
            <person name="Hayashi Y."/>
            <person name="Hensch T.K."/>
            <person name="Hirokawa N."/>
            <person name="Hill D."/>
            <person name="Huminiecki L."/>
            <person name="Iacono M."/>
            <person name="Ikeo K."/>
            <person name="Iwama A."/>
            <person name="Ishikawa T."/>
            <person name="Jakt M."/>
            <person name="Kanapin A."/>
            <person name="Katoh M."/>
            <person name="Kawasawa Y."/>
            <person name="Kelso J."/>
            <person name="Kitamura H."/>
            <person name="Kitano H."/>
            <person name="Kollias G."/>
            <person name="Krishnan S.P."/>
            <person name="Kruger A."/>
            <person name="Kummerfeld S.K."/>
            <person name="Kurochkin I.V."/>
            <person name="Lareau L.F."/>
            <person name="Lazarevic D."/>
            <person name="Lipovich L."/>
            <person name="Liu J."/>
            <person name="Liuni S."/>
            <person name="McWilliam S."/>
            <person name="Madan Babu M."/>
            <person name="Madera M."/>
            <person name="Marchionni L."/>
            <person name="Matsuda H."/>
            <person name="Matsuzawa S."/>
            <person name="Miki H."/>
            <person name="Mignone F."/>
            <person name="Miyake S."/>
            <person name="Morris K."/>
            <person name="Mottagui-Tabar S."/>
            <person name="Mulder N."/>
            <person name="Nakano N."/>
            <person name="Nakauchi H."/>
            <person name="Ng P."/>
            <person name="Nilsson R."/>
            <person name="Nishiguchi S."/>
            <person name="Nishikawa S."/>
            <person name="Nori F."/>
            <person name="Ohara O."/>
            <person name="Okazaki Y."/>
            <person name="Orlando V."/>
            <person name="Pang K.C."/>
            <person name="Pavan W.J."/>
            <person name="Pavesi G."/>
            <person name="Pesole G."/>
            <person name="Petrovsky N."/>
            <person name="Piazza S."/>
            <person name="Reed J."/>
            <person name="Reid J.F."/>
            <person name="Ring B.Z."/>
            <person name="Ringwald M."/>
            <person name="Rost B."/>
            <person name="Ruan Y."/>
            <person name="Salzberg S.L."/>
            <person name="Sandelin A."/>
            <person name="Schneider C."/>
            <person name="Schoenbach C."/>
            <person name="Sekiguchi K."/>
            <person name="Semple C.A."/>
            <person name="Seno S."/>
            <person name="Sessa L."/>
            <person name="Sheng Y."/>
            <person name="Shibata Y."/>
            <person name="Shimada H."/>
            <person name="Shimada K."/>
            <person name="Silva D."/>
            <person name="Sinclair B."/>
            <person name="Sperling S."/>
            <person name="Stupka E."/>
            <person name="Sugiura K."/>
            <person name="Sultana R."/>
            <person name="Takenaka Y."/>
            <person name="Taki K."/>
            <person name="Tammoja K."/>
            <person name="Tan S.L."/>
            <person name="Tang S."/>
            <person name="Taylor M.S."/>
            <person name="Tegner J."/>
            <person name="Teichmann S.A."/>
            <person name="Ueda H.R."/>
            <person name="van Nimwegen E."/>
            <person name="Verardo R."/>
            <person name="Wei C.L."/>
            <person name="Yagi K."/>
            <person name="Yamanishi H."/>
            <person name="Zabarovsky E."/>
            <person name="Zhu S."/>
            <person name="Zimmer A."/>
            <person name="Hide W."/>
            <person name="Bult C."/>
            <person name="Grimmond S.M."/>
            <person name="Teasdale R.D."/>
            <person name="Liu E.T."/>
            <person name="Brusic V."/>
            <person name="Quackenbush J."/>
            <person name="Wahlestedt C."/>
            <person name="Mattick J.S."/>
            <person name="Hume D.A."/>
            <person name="Kai C."/>
            <person name="Sasaki D."/>
            <person name="Tomaru Y."/>
            <person name="Fukuda S."/>
            <person name="Kanamori-Katayama M."/>
            <person name="Suzuki M."/>
            <person name="Aoki J."/>
            <person name="Arakawa T."/>
            <person name="Iida J."/>
            <person name="Imamura K."/>
            <person name="Itoh M."/>
            <person name="Kato T."/>
            <person name="Kawaji H."/>
            <person name="Kawagashira N."/>
            <person name="Kawashima T."/>
            <person name="Kojima M."/>
            <person name="Kondo S."/>
            <person name="Konno H."/>
            <person name="Nakano K."/>
            <person name="Ninomiya N."/>
            <person name="Nishio T."/>
            <person name="Okada M."/>
            <person name="Plessy C."/>
            <person name="Shibata K."/>
            <person name="Shiraki T."/>
            <person name="Suzuki S."/>
            <person name="Tagami M."/>
            <person name="Waki K."/>
            <person name="Watahiki A."/>
            <person name="Okamura-Oho Y."/>
            <person name="Suzuki H."/>
            <person name="Kawai J."/>
            <person name="Hayashizaki Y."/>
        </authorList>
    </citation>
    <scope>NUCLEOTIDE SEQUENCE [LARGE SCALE MRNA] (ISOFORM 2)</scope>
    <source>
        <strain>C57BL/6J</strain>
        <tissue>Heart</tissue>
    </source>
</reference>
<reference key="2">
    <citation type="journal article" date="2004" name="Genome Res.">
        <title>The status, quality, and expansion of the NIH full-length cDNA project: the Mammalian Gene Collection (MGC).</title>
        <authorList>
            <consortium name="The MGC Project Team"/>
        </authorList>
    </citation>
    <scope>NUCLEOTIDE SEQUENCE [LARGE SCALE MRNA] (ISOFORM 1)</scope>
    <source>
        <strain>C57BL/6J</strain>
        <strain>Czech II</strain>
        <tissue>Brain</tissue>
        <tissue>Mammary tumor</tissue>
    </source>
</reference>
<gene>
    <name evidence="6" type="primary">Tmtc2</name>
</gene>
<feature type="chain" id="PRO_0000280304" description="Protein O-mannosyl-transferase TMTC2">
    <location>
        <begin position="1"/>
        <end position="836"/>
    </location>
</feature>
<feature type="transmembrane region" description="Helical" evidence="2">
    <location>
        <begin position="1"/>
        <end position="21"/>
    </location>
</feature>
<feature type="topological domain" description="Extracellular" evidence="5">
    <location>
        <begin position="22"/>
        <end position="77"/>
    </location>
</feature>
<feature type="transmembrane region" description="Helical" evidence="2">
    <location>
        <begin position="78"/>
        <end position="98"/>
    </location>
</feature>
<feature type="topological domain" description="Cytoplasmic" evidence="5">
    <location>
        <begin position="99"/>
        <end position="107"/>
    </location>
</feature>
<feature type="transmembrane region" description="Helical" evidence="2">
    <location>
        <begin position="108"/>
        <end position="128"/>
    </location>
</feature>
<feature type="topological domain" description="Extracellular" evidence="5">
    <location>
        <begin position="129"/>
        <end position="132"/>
    </location>
</feature>
<feature type="transmembrane region" description="Helical" evidence="2">
    <location>
        <begin position="133"/>
        <end position="153"/>
    </location>
</feature>
<feature type="topological domain" description="Cytoplasmic" evidence="5">
    <location>
        <begin position="154"/>
        <end position="168"/>
    </location>
</feature>
<feature type="transmembrane region" description="Helical" evidence="2">
    <location>
        <begin position="169"/>
        <end position="184"/>
    </location>
</feature>
<feature type="transmembrane region" description="Helical" evidence="2">
    <location>
        <begin position="185"/>
        <end position="204"/>
    </location>
</feature>
<feature type="topological domain" description="Cytoplasmic" evidence="5">
    <location>
        <begin position="205"/>
        <end position="220"/>
    </location>
</feature>
<feature type="transmembrane region" description="Helical" evidence="2">
    <location>
        <begin position="221"/>
        <end position="241"/>
    </location>
</feature>
<feature type="topological domain" description="Extracellular" evidence="5">
    <location>
        <begin position="242"/>
        <end position="312"/>
    </location>
</feature>
<feature type="transmembrane region" description="Helical" evidence="2">
    <location>
        <begin position="313"/>
        <end position="333"/>
    </location>
</feature>
<feature type="topological domain" description="Cytoplasmic" evidence="5">
    <location>
        <begin position="334"/>
        <end position="392"/>
    </location>
</feature>
<feature type="transmembrane region" description="Helical" evidence="2">
    <location>
        <begin position="393"/>
        <end position="415"/>
    </location>
</feature>
<feature type="topological domain" description="Extracellular" evidence="5">
    <location>
        <begin position="416"/>
        <end position="422"/>
    </location>
</feature>
<feature type="transmembrane region" description="Helical" evidence="2">
    <location>
        <begin position="423"/>
        <end position="443"/>
    </location>
</feature>
<feature type="topological domain" description="Cytoplasmic" evidence="5">
    <location>
        <begin position="444"/>
        <end position="449"/>
    </location>
</feature>
<feature type="transmembrane region" description="Helical" evidence="2">
    <location>
        <begin position="450"/>
        <end position="470"/>
    </location>
</feature>
<feature type="topological domain" description="Extracellular" evidence="5">
    <location>
        <begin position="471"/>
        <end position="836"/>
    </location>
</feature>
<feature type="repeat" description="TPR 1" evidence="3">
    <location>
        <begin position="493"/>
        <end position="526"/>
    </location>
</feature>
<feature type="repeat" description="TPR 2" evidence="3">
    <location>
        <begin position="527"/>
        <end position="560"/>
    </location>
</feature>
<feature type="repeat" description="TPR 3" evidence="3">
    <location>
        <begin position="561"/>
        <end position="594"/>
    </location>
</feature>
<feature type="repeat" description="TPR 4" evidence="3">
    <location>
        <begin position="606"/>
        <end position="639"/>
    </location>
</feature>
<feature type="repeat" description="TPR 5" evidence="3">
    <location>
        <begin position="643"/>
        <end position="676"/>
    </location>
</feature>
<feature type="repeat" description="TPR 6" evidence="3">
    <location>
        <begin position="677"/>
        <end position="710"/>
    </location>
</feature>
<feature type="repeat" description="TPR 7" evidence="3">
    <location>
        <begin position="711"/>
        <end position="744"/>
    </location>
</feature>
<feature type="repeat" description="TPR 8" evidence="3">
    <location>
        <begin position="745"/>
        <end position="778"/>
    </location>
</feature>
<feature type="repeat" description="TPR 9" evidence="3">
    <location>
        <begin position="779"/>
        <end position="812"/>
    </location>
</feature>
<feature type="splice variant" id="VSP_023628" description="In isoform 2." evidence="4">
    <original>QFL</original>
    <variation>EWR</variation>
    <location>
        <begin position="719"/>
        <end position="721"/>
    </location>
</feature>
<feature type="splice variant" id="VSP_023629" description="In isoform 2." evidence="4">
    <location>
        <begin position="722"/>
        <end position="836"/>
    </location>
</feature>
<protein>
    <recommendedName>
        <fullName evidence="5">Protein O-mannosyl-transferase TMTC2</fullName>
        <ecNumber evidence="1">2.4.1.109</ecNumber>
    </recommendedName>
    <alternativeName>
        <fullName evidence="1">Transmembrane O-mannosyltransferase targeting cadherins 2</fullName>
    </alternativeName>
    <alternativeName>
        <fullName evidence="1">Transmembrane and tetratricopeptide repeat-containing 2</fullName>
    </alternativeName>
</protein>
<proteinExistence type="evidence at transcript level"/>
<comment type="function">
    <text evidence="1">Transfers mannosyl residues to the hydroxyl group of serine or threonine residues. The 4 members of the TMTC family are O-mannosyl-transferases dedicated primarily to the cadherin superfamily, each member seems to have a distinct role in decorating the cadherin domains with O-linked mannose glycans at specific regions. Also acts as O-mannosyl-transferase on other proteins such as PDIA3.</text>
</comment>
<comment type="catalytic activity">
    <reaction evidence="1">
        <text>a di-trans,poly-cis-dolichyl beta-D-mannosyl phosphate + L-seryl-[protein] = 3-O-(alpha-D-mannosyl)-L-seryl-[protein] + a di-trans,poly-cis-dolichyl phosphate + H(+)</text>
        <dbReference type="Rhea" id="RHEA:17377"/>
        <dbReference type="Rhea" id="RHEA-COMP:9863"/>
        <dbReference type="Rhea" id="RHEA-COMP:13546"/>
        <dbReference type="Rhea" id="RHEA-COMP:19498"/>
        <dbReference type="Rhea" id="RHEA-COMP:19501"/>
        <dbReference type="ChEBI" id="CHEBI:15378"/>
        <dbReference type="ChEBI" id="CHEBI:29999"/>
        <dbReference type="ChEBI" id="CHEBI:57683"/>
        <dbReference type="ChEBI" id="CHEBI:58211"/>
        <dbReference type="ChEBI" id="CHEBI:137321"/>
        <dbReference type="EC" id="2.4.1.109"/>
    </reaction>
</comment>
<comment type="catalytic activity">
    <reaction evidence="1">
        <text>a di-trans,poly-cis-dolichyl beta-D-mannosyl phosphate + L-threonyl-[protein] = 3-O-(alpha-D-mannosyl)-L-threonyl-[protein] + a di-trans,poly-cis-dolichyl phosphate + H(+)</text>
        <dbReference type="Rhea" id="RHEA:53396"/>
        <dbReference type="Rhea" id="RHEA-COMP:11060"/>
        <dbReference type="Rhea" id="RHEA-COMP:13547"/>
        <dbReference type="Rhea" id="RHEA-COMP:19498"/>
        <dbReference type="Rhea" id="RHEA-COMP:19501"/>
        <dbReference type="ChEBI" id="CHEBI:15378"/>
        <dbReference type="ChEBI" id="CHEBI:30013"/>
        <dbReference type="ChEBI" id="CHEBI:57683"/>
        <dbReference type="ChEBI" id="CHEBI:58211"/>
        <dbReference type="ChEBI" id="CHEBI:137323"/>
        <dbReference type="EC" id="2.4.1.109"/>
    </reaction>
</comment>
<comment type="pathway">
    <text evidence="1">Protein modification; protein glycosylation.</text>
</comment>
<comment type="subcellular location">
    <subcellularLocation>
        <location evidence="2">Membrane</location>
        <topology evidence="2">Multi-pass membrane protein</topology>
    </subcellularLocation>
    <subcellularLocation>
        <location evidence="1">Endoplasmic reticulum</location>
    </subcellularLocation>
</comment>
<comment type="alternative products">
    <event type="alternative splicing"/>
    <isoform>
        <id>Q56A06-1</id>
        <name>1</name>
        <sequence type="displayed"/>
    </isoform>
    <isoform>
        <id>Q56A06-2</id>
        <name>2</name>
        <sequence type="described" ref="VSP_023628 VSP_023629"/>
    </isoform>
</comment>
<comment type="similarity">
    <text evidence="5">Belongs to the TMTC family.</text>
</comment>